<keyword id="KW-1185">Reference proteome</keyword>
<keyword id="KW-0687">Ribonucleoprotein</keyword>
<keyword id="KW-0689">Ribosomal protein</keyword>
<dbReference type="EMBL" id="CR378664">
    <property type="protein sequence ID" value="CAG18864.1"/>
    <property type="molecule type" value="Genomic_DNA"/>
</dbReference>
<dbReference type="RefSeq" id="WP_005301411.1">
    <property type="nucleotide sequence ID" value="NC_006370.1"/>
</dbReference>
<dbReference type="SMR" id="Q6LV11"/>
<dbReference type="STRING" id="298386.PBPRA0433"/>
<dbReference type="GeneID" id="93549660"/>
<dbReference type="KEGG" id="ppr:PBPRA0433"/>
<dbReference type="eggNOG" id="COG0828">
    <property type="taxonomic scope" value="Bacteria"/>
</dbReference>
<dbReference type="HOGENOM" id="CLU_159258_1_0_6"/>
<dbReference type="Proteomes" id="UP000000593">
    <property type="component" value="Chromosome 1"/>
</dbReference>
<dbReference type="GO" id="GO:1990904">
    <property type="term" value="C:ribonucleoprotein complex"/>
    <property type="evidence" value="ECO:0007669"/>
    <property type="project" value="UniProtKB-KW"/>
</dbReference>
<dbReference type="GO" id="GO:0005840">
    <property type="term" value="C:ribosome"/>
    <property type="evidence" value="ECO:0007669"/>
    <property type="project" value="UniProtKB-KW"/>
</dbReference>
<dbReference type="GO" id="GO:0003735">
    <property type="term" value="F:structural constituent of ribosome"/>
    <property type="evidence" value="ECO:0007669"/>
    <property type="project" value="InterPro"/>
</dbReference>
<dbReference type="GO" id="GO:0006412">
    <property type="term" value="P:translation"/>
    <property type="evidence" value="ECO:0007669"/>
    <property type="project" value="UniProtKB-UniRule"/>
</dbReference>
<dbReference type="Gene3D" id="1.20.5.1150">
    <property type="entry name" value="Ribosomal protein S8"/>
    <property type="match status" value="1"/>
</dbReference>
<dbReference type="HAMAP" id="MF_00358">
    <property type="entry name" value="Ribosomal_bS21"/>
    <property type="match status" value="1"/>
</dbReference>
<dbReference type="InterPro" id="IPR001911">
    <property type="entry name" value="Ribosomal_bS21"/>
</dbReference>
<dbReference type="InterPro" id="IPR018278">
    <property type="entry name" value="Ribosomal_bS21_CS"/>
</dbReference>
<dbReference type="InterPro" id="IPR038380">
    <property type="entry name" value="Ribosomal_bS21_sf"/>
</dbReference>
<dbReference type="NCBIfam" id="TIGR00030">
    <property type="entry name" value="S21p"/>
    <property type="match status" value="1"/>
</dbReference>
<dbReference type="PANTHER" id="PTHR21109">
    <property type="entry name" value="MITOCHONDRIAL 28S RIBOSOMAL PROTEIN S21"/>
    <property type="match status" value="1"/>
</dbReference>
<dbReference type="PANTHER" id="PTHR21109:SF22">
    <property type="entry name" value="SMALL RIBOSOMAL SUBUNIT PROTEIN BS21"/>
    <property type="match status" value="1"/>
</dbReference>
<dbReference type="Pfam" id="PF01165">
    <property type="entry name" value="Ribosomal_S21"/>
    <property type="match status" value="1"/>
</dbReference>
<dbReference type="PRINTS" id="PR00976">
    <property type="entry name" value="RIBOSOMALS21"/>
</dbReference>
<dbReference type="PROSITE" id="PS01181">
    <property type="entry name" value="RIBOSOMAL_S21"/>
    <property type="match status" value="1"/>
</dbReference>
<protein>
    <recommendedName>
        <fullName evidence="1">Small ribosomal subunit protein bS21</fullName>
    </recommendedName>
    <alternativeName>
        <fullName evidence="2">30S ribosomal protein S21</fullName>
    </alternativeName>
</protein>
<name>RS21_PHOPR</name>
<comment type="similarity">
    <text evidence="1">Belongs to the bacterial ribosomal protein bS21 family.</text>
</comment>
<accession>Q6LV11</accession>
<evidence type="ECO:0000255" key="1">
    <source>
        <dbReference type="HAMAP-Rule" id="MF_00358"/>
    </source>
</evidence>
<evidence type="ECO:0000305" key="2"/>
<reference key="1">
    <citation type="journal article" date="2005" name="Science">
        <title>Life at depth: Photobacterium profundum genome sequence and expression analysis.</title>
        <authorList>
            <person name="Vezzi A."/>
            <person name="Campanaro S."/>
            <person name="D'Angelo M."/>
            <person name="Simonato F."/>
            <person name="Vitulo N."/>
            <person name="Lauro F.M."/>
            <person name="Cestaro A."/>
            <person name="Malacrida G."/>
            <person name="Simionati B."/>
            <person name="Cannata N."/>
            <person name="Romualdi C."/>
            <person name="Bartlett D.H."/>
            <person name="Valle G."/>
        </authorList>
    </citation>
    <scope>NUCLEOTIDE SEQUENCE [LARGE SCALE GENOMIC DNA]</scope>
    <source>
        <strain>ATCC BAA-1253 / SS9</strain>
    </source>
</reference>
<organism>
    <name type="scientific">Photobacterium profundum (strain SS9)</name>
    <dbReference type="NCBI Taxonomy" id="298386"/>
    <lineage>
        <taxon>Bacteria</taxon>
        <taxon>Pseudomonadati</taxon>
        <taxon>Pseudomonadota</taxon>
        <taxon>Gammaproteobacteria</taxon>
        <taxon>Vibrionales</taxon>
        <taxon>Vibrionaceae</taxon>
        <taxon>Photobacterium</taxon>
    </lineage>
</organism>
<proteinExistence type="inferred from homology"/>
<feature type="chain" id="PRO_0000266724" description="Small ribosomal subunit protein bS21">
    <location>
        <begin position="1"/>
        <end position="71"/>
    </location>
</feature>
<sequence>MPVIKVRENEPFDVALRRFKRSCEKAGILSEVRRREHFEKPTTVRKRAKAAAVKRHLKKLARENARRVRLY</sequence>
<gene>
    <name evidence="1" type="primary">rpsU</name>
    <name type="ordered locus">PBPRA0433</name>
</gene>